<accession>A5E5I9</accession>
<sequence>MSTDTSIKAGIDSIRAKADDLHLAEDSSNGTQANLDKHQIKATTAVGQDNGNNAGVADHKNDKNNKNNKNNNDDDDDDEDDDVAAAAAAVGDAGSDKKKKKKKSSNKKKKKKLVSIDQSYPDGVFPEGEWQEYGLDSNKYRTTSEEMRYLDRQQNNKWEDFRKGAEIHRRVRAKAKSSIRPGMTMIEIADLIENSVRAYASADHTLKAGIGFPTGLSLNHVAAHYTPNTGDKLTLGKDDLMKVDIGVHVNGRICDSAFTMTFNEDGKYDSIMQAVKEATNTGVKEAGIDVRLNDIGAAVQEVMESYEMELDGKTYPIKCIKNLNGHNIGDFIIHSGKTVPIVANGDMTKMEEGETFAIETFGSTGNGYVLPEGECSHYALNSGVESIKPPSDKAKHLLNTIQSNFGTLPWCRRYLERTGEEKYLFALNQLVKAGIVEDYPPIVDKRGSYTAQFEHTILLHPHKKEVVTRGDDY</sequence>
<evidence type="ECO:0000255" key="1">
    <source>
        <dbReference type="HAMAP-Rule" id="MF_03175"/>
    </source>
</evidence>
<evidence type="ECO:0000256" key="2">
    <source>
        <dbReference type="SAM" id="MobiDB-lite"/>
    </source>
</evidence>
<comment type="function">
    <text evidence="1">Cotranslationally removes the N-terminal methionine from nascent proteins. The N-terminal methionine is often cleaved when the second residue in the primary sequence is small and uncharged (Met-Ala-, Cys, Gly, Pro, Ser, Thr, or Val).</text>
</comment>
<comment type="catalytic activity">
    <reaction evidence="1">
        <text>Release of N-terminal amino acids, preferentially methionine, from peptides and arylamides.</text>
        <dbReference type="EC" id="3.4.11.18"/>
    </reaction>
</comment>
<comment type="cofactor">
    <cofactor evidence="1">
        <name>Co(2+)</name>
        <dbReference type="ChEBI" id="CHEBI:48828"/>
    </cofactor>
    <cofactor evidence="1">
        <name>Zn(2+)</name>
        <dbReference type="ChEBI" id="CHEBI:29105"/>
    </cofactor>
    <cofactor evidence="1">
        <name>Mn(2+)</name>
        <dbReference type="ChEBI" id="CHEBI:29035"/>
    </cofactor>
    <cofactor evidence="1">
        <name>Fe(2+)</name>
        <dbReference type="ChEBI" id="CHEBI:29033"/>
    </cofactor>
    <text evidence="1">Binds 2 divalent metal cations per subunit. Has a high-affinity and a low affinity metal-binding site. The true nature of the physiological cofactor is under debate. The enzyme is active with cobalt, zinc, manganese or divalent iron ions. Most likely, methionine aminopeptidases function as mononuclear Fe(2+)-metalloproteases under physiological conditions, and the catalytically relevant metal-binding site has been assigned to the histidine-containing high-affinity site.</text>
</comment>
<comment type="subcellular location">
    <subcellularLocation>
        <location evidence="1">Cytoplasm</location>
    </subcellularLocation>
</comment>
<comment type="similarity">
    <text evidence="1">Belongs to the peptidase M24A family. Methionine aminopeptidase eukaryotic type 2 subfamily.</text>
</comment>
<protein>
    <recommendedName>
        <fullName evidence="1">Methionine aminopeptidase 2</fullName>
        <shortName evidence="1">MAP 2</shortName>
        <shortName evidence="1">MetAP 2</shortName>
        <ecNumber evidence="1">3.4.11.18</ecNumber>
    </recommendedName>
    <alternativeName>
        <fullName evidence="1">Peptidase M</fullName>
    </alternativeName>
</protein>
<organism>
    <name type="scientific">Lodderomyces elongisporus (strain ATCC 11503 / CBS 2605 / JCM 1781 / NBRC 1676 / NRRL YB-4239)</name>
    <name type="common">Yeast</name>
    <name type="synonym">Saccharomyces elongisporus</name>
    <dbReference type="NCBI Taxonomy" id="379508"/>
    <lineage>
        <taxon>Eukaryota</taxon>
        <taxon>Fungi</taxon>
        <taxon>Dikarya</taxon>
        <taxon>Ascomycota</taxon>
        <taxon>Saccharomycotina</taxon>
        <taxon>Pichiomycetes</taxon>
        <taxon>Debaryomycetaceae</taxon>
        <taxon>Candida/Lodderomyces clade</taxon>
        <taxon>Lodderomyces</taxon>
    </lineage>
</organism>
<proteinExistence type="inferred from homology"/>
<name>MAP2_LODEL</name>
<dbReference type="EC" id="3.4.11.18" evidence="1"/>
<dbReference type="EMBL" id="CH981530">
    <property type="protein sequence ID" value="EDK46697.1"/>
    <property type="molecule type" value="Genomic_DNA"/>
</dbReference>
<dbReference type="RefSeq" id="XP_001524065.1">
    <property type="nucleotide sequence ID" value="XM_001524015.1"/>
</dbReference>
<dbReference type="SMR" id="A5E5I9"/>
<dbReference type="FunCoup" id="A5E5I9">
    <property type="interactions" value="1139"/>
</dbReference>
<dbReference type="STRING" id="379508.A5E5I9"/>
<dbReference type="GeneID" id="5231111"/>
<dbReference type="KEGG" id="lel:PVL30_005600"/>
<dbReference type="VEuPathDB" id="FungiDB:LELG_04878"/>
<dbReference type="eggNOG" id="KOG2775">
    <property type="taxonomic scope" value="Eukaryota"/>
</dbReference>
<dbReference type="HOGENOM" id="CLU_015857_7_1_1"/>
<dbReference type="InParanoid" id="A5E5I9"/>
<dbReference type="OMA" id="PFAKRWL"/>
<dbReference type="OrthoDB" id="7848262at2759"/>
<dbReference type="Proteomes" id="UP000001996">
    <property type="component" value="Unassembled WGS sequence"/>
</dbReference>
<dbReference type="GO" id="GO:0005737">
    <property type="term" value="C:cytoplasm"/>
    <property type="evidence" value="ECO:0007669"/>
    <property type="project" value="UniProtKB-SubCell"/>
</dbReference>
<dbReference type="GO" id="GO:0004239">
    <property type="term" value="F:initiator methionyl aminopeptidase activity"/>
    <property type="evidence" value="ECO:0007669"/>
    <property type="project" value="UniProtKB-UniRule"/>
</dbReference>
<dbReference type="GO" id="GO:0046872">
    <property type="term" value="F:metal ion binding"/>
    <property type="evidence" value="ECO:0007669"/>
    <property type="project" value="UniProtKB-UniRule"/>
</dbReference>
<dbReference type="GO" id="GO:0070006">
    <property type="term" value="F:metalloaminopeptidase activity"/>
    <property type="evidence" value="ECO:0007669"/>
    <property type="project" value="UniProtKB-UniRule"/>
</dbReference>
<dbReference type="GO" id="GO:0051604">
    <property type="term" value="P:protein maturation"/>
    <property type="evidence" value="ECO:0007669"/>
    <property type="project" value="EnsemblFungi"/>
</dbReference>
<dbReference type="GO" id="GO:0006508">
    <property type="term" value="P:proteolysis"/>
    <property type="evidence" value="ECO:0007669"/>
    <property type="project" value="UniProtKB-KW"/>
</dbReference>
<dbReference type="CDD" id="cd01088">
    <property type="entry name" value="MetAP2"/>
    <property type="match status" value="1"/>
</dbReference>
<dbReference type="Gene3D" id="3.90.230.10">
    <property type="entry name" value="Creatinase/methionine aminopeptidase superfamily"/>
    <property type="match status" value="1"/>
</dbReference>
<dbReference type="Gene3D" id="1.10.10.10">
    <property type="entry name" value="Winged helix-like DNA-binding domain superfamily/Winged helix DNA-binding domain"/>
    <property type="match status" value="1"/>
</dbReference>
<dbReference type="HAMAP" id="MF_03175">
    <property type="entry name" value="MetAP_2_euk"/>
    <property type="match status" value="1"/>
</dbReference>
<dbReference type="InterPro" id="IPR036005">
    <property type="entry name" value="Creatinase/aminopeptidase-like"/>
</dbReference>
<dbReference type="InterPro" id="IPR050247">
    <property type="entry name" value="Met_Aminopeptidase_Type2"/>
</dbReference>
<dbReference type="InterPro" id="IPR000994">
    <property type="entry name" value="Pept_M24"/>
</dbReference>
<dbReference type="InterPro" id="IPR001714">
    <property type="entry name" value="Pept_M24_MAP"/>
</dbReference>
<dbReference type="InterPro" id="IPR002468">
    <property type="entry name" value="Pept_M24A_MAP2"/>
</dbReference>
<dbReference type="InterPro" id="IPR018349">
    <property type="entry name" value="Pept_M24A_MAP2_BS"/>
</dbReference>
<dbReference type="InterPro" id="IPR036388">
    <property type="entry name" value="WH-like_DNA-bd_sf"/>
</dbReference>
<dbReference type="InterPro" id="IPR036390">
    <property type="entry name" value="WH_DNA-bd_sf"/>
</dbReference>
<dbReference type="NCBIfam" id="TIGR00501">
    <property type="entry name" value="met_pdase_II"/>
    <property type="match status" value="1"/>
</dbReference>
<dbReference type="PANTHER" id="PTHR45777">
    <property type="entry name" value="METHIONINE AMINOPEPTIDASE 2"/>
    <property type="match status" value="1"/>
</dbReference>
<dbReference type="PANTHER" id="PTHR45777:SF2">
    <property type="entry name" value="METHIONINE AMINOPEPTIDASE 2"/>
    <property type="match status" value="1"/>
</dbReference>
<dbReference type="Pfam" id="PF00557">
    <property type="entry name" value="Peptidase_M24"/>
    <property type="match status" value="1"/>
</dbReference>
<dbReference type="PRINTS" id="PR00599">
    <property type="entry name" value="MAPEPTIDASE"/>
</dbReference>
<dbReference type="SUPFAM" id="SSF55920">
    <property type="entry name" value="Creatinase/aminopeptidase"/>
    <property type="match status" value="1"/>
</dbReference>
<dbReference type="SUPFAM" id="SSF46785">
    <property type="entry name" value="Winged helix' DNA-binding domain"/>
    <property type="match status" value="1"/>
</dbReference>
<dbReference type="PROSITE" id="PS01202">
    <property type="entry name" value="MAP_2"/>
    <property type="match status" value="1"/>
</dbReference>
<gene>
    <name evidence="1" type="primary">MAP2</name>
    <name type="ORF">LELG_04878</name>
</gene>
<reference key="1">
    <citation type="journal article" date="2009" name="Nature">
        <title>Evolution of pathogenicity and sexual reproduction in eight Candida genomes.</title>
        <authorList>
            <person name="Butler G."/>
            <person name="Rasmussen M.D."/>
            <person name="Lin M.F."/>
            <person name="Santos M.A.S."/>
            <person name="Sakthikumar S."/>
            <person name="Munro C.A."/>
            <person name="Rheinbay E."/>
            <person name="Grabherr M."/>
            <person name="Forche A."/>
            <person name="Reedy J.L."/>
            <person name="Agrafioti I."/>
            <person name="Arnaud M.B."/>
            <person name="Bates S."/>
            <person name="Brown A.J.P."/>
            <person name="Brunke S."/>
            <person name="Costanzo M.C."/>
            <person name="Fitzpatrick D.A."/>
            <person name="de Groot P.W.J."/>
            <person name="Harris D."/>
            <person name="Hoyer L.L."/>
            <person name="Hube B."/>
            <person name="Klis F.M."/>
            <person name="Kodira C."/>
            <person name="Lennard N."/>
            <person name="Logue M.E."/>
            <person name="Martin R."/>
            <person name="Neiman A.M."/>
            <person name="Nikolaou E."/>
            <person name="Quail M.A."/>
            <person name="Quinn J."/>
            <person name="Santos M.C."/>
            <person name="Schmitzberger F.F."/>
            <person name="Sherlock G."/>
            <person name="Shah P."/>
            <person name="Silverstein K.A.T."/>
            <person name="Skrzypek M.S."/>
            <person name="Soll D."/>
            <person name="Staggs R."/>
            <person name="Stansfield I."/>
            <person name="Stumpf M.P.H."/>
            <person name="Sudbery P.E."/>
            <person name="Srikantha T."/>
            <person name="Zeng Q."/>
            <person name="Berman J."/>
            <person name="Berriman M."/>
            <person name="Heitman J."/>
            <person name="Gow N.A.R."/>
            <person name="Lorenz M.C."/>
            <person name="Birren B.W."/>
            <person name="Kellis M."/>
            <person name="Cuomo C.A."/>
        </authorList>
    </citation>
    <scope>NUCLEOTIDE SEQUENCE [LARGE SCALE GENOMIC DNA]</scope>
    <source>
        <strain>ATCC 11503 / BCRC 21390 / CBS 2605 / JCM 1781 / NBRC 1676 / NRRL YB-4239</strain>
    </source>
</reference>
<feature type="chain" id="PRO_0000407655" description="Methionine aminopeptidase 2">
    <location>
        <begin position="1"/>
        <end position="473"/>
    </location>
</feature>
<feature type="region of interest" description="Disordered" evidence="2">
    <location>
        <begin position="23"/>
        <end position="121"/>
    </location>
</feature>
<feature type="compositionally biased region" description="Polar residues" evidence="2">
    <location>
        <begin position="41"/>
        <end position="53"/>
    </location>
</feature>
<feature type="compositionally biased region" description="Acidic residues" evidence="2">
    <location>
        <begin position="73"/>
        <end position="83"/>
    </location>
</feature>
<feature type="compositionally biased region" description="Low complexity" evidence="2">
    <location>
        <begin position="84"/>
        <end position="93"/>
    </location>
</feature>
<feature type="compositionally biased region" description="Basic residues" evidence="2">
    <location>
        <begin position="97"/>
        <end position="113"/>
    </location>
</feature>
<feature type="binding site" evidence="1">
    <location>
        <position position="224"/>
    </location>
    <ligand>
        <name>substrate</name>
    </ligand>
</feature>
<feature type="binding site" evidence="1">
    <location>
        <position position="244"/>
    </location>
    <ligand>
        <name>a divalent metal cation</name>
        <dbReference type="ChEBI" id="CHEBI:60240"/>
        <label>1</label>
    </ligand>
</feature>
<feature type="binding site" evidence="1">
    <location>
        <position position="255"/>
    </location>
    <ligand>
        <name>a divalent metal cation</name>
        <dbReference type="ChEBI" id="CHEBI:60240"/>
        <label>1</label>
    </ligand>
</feature>
<feature type="binding site" evidence="1">
    <location>
        <position position="255"/>
    </location>
    <ligand>
        <name>a divalent metal cation</name>
        <dbReference type="ChEBI" id="CHEBI:60240"/>
        <label>2</label>
        <note>catalytic</note>
    </ligand>
</feature>
<feature type="binding site" evidence="1">
    <location>
        <position position="326"/>
    </location>
    <ligand>
        <name>a divalent metal cation</name>
        <dbReference type="ChEBI" id="CHEBI:60240"/>
        <label>2</label>
        <note>catalytic</note>
    </ligand>
</feature>
<feature type="binding site" evidence="1">
    <location>
        <position position="334"/>
    </location>
    <ligand>
        <name>substrate</name>
    </ligand>
</feature>
<feature type="binding site" evidence="1">
    <location>
        <position position="359"/>
    </location>
    <ligand>
        <name>a divalent metal cation</name>
        <dbReference type="ChEBI" id="CHEBI:60240"/>
        <label>2</label>
        <note>catalytic</note>
    </ligand>
</feature>
<feature type="binding site" evidence="1">
    <location>
        <position position="454"/>
    </location>
    <ligand>
        <name>a divalent metal cation</name>
        <dbReference type="ChEBI" id="CHEBI:60240"/>
        <label>1</label>
    </ligand>
</feature>
<feature type="binding site" evidence="1">
    <location>
        <position position="454"/>
    </location>
    <ligand>
        <name>a divalent metal cation</name>
        <dbReference type="ChEBI" id="CHEBI:60240"/>
        <label>2</label>
        <note>catalytic</note>
    </ligand>
</feature>
<keyword id="KW-0031">Aminopeptidase</keyword>
<keyword id="KW-0963">Cytoplasm</keyword>
<keyword id="KW-0378">Hydrolase</keyword>
<keyword id="KW-0479">Metal-binding</keyword>
<keyword id="KW-0645">Protease</keyword>
<keyword id="KW-1185">Reference proteome</keyword>